<gene>
    <name evidence="1" type="primary">tal</name>
    <name type="ordered locus">Tbd_0665</name>
</gene>
<evidence type="ECO:0000255" key="1">
    <source>
        <dbReference type="HAMAP-Rule" id="MF_00493"/>
    </source>
</evidence>
<organism>
    <name type="scientific">Thiobacillus denitrificans (strain ATCC 25259 / T1)</name>
    <dbReference type="NCBI Taxonomy" id="292415"/>
    <lineage>
        <taxon>Bacteria</taxon>
        <taxon>Pseudomonadati</taxon>
        <taxon>Pseudomonadota</taxon>
        <taxon>Betaproteobacteria</taxon>
        <taxon>Nitrosomonadales</taxon>
        <taxon>Thiobacillaceae</taxon>
        <taxon>Thiobacillus</taxon>
    </lineage>
</organism>
<accession>Q3SL03</accession>
<feature type="chain" id="PRO_1000026532" description="Transaldolase">
    <location>
        <begin position="1"/>
        <end position="359"/>
    </location>
</feature>
<feature type="active site" description="Schiff-base intermediate with substrate" evidence="1">
    <location>
        <position position="139"/>
    </location>
</feature>
<keyword id="KW-0963">Cytoplasm</keyword>
<keyword id="KW-0570">Pentose shunt</keyword>
<keyword id="KW-1185">Reference proteome</keyword>
<keyword id="KW-0704">Schiff base</keyword>
<keyword id="KW-0808">Transferase</keyword>
<name>TAL_THIDA</name>
<proteinExistence type="inferred from homology"/>
<reference key="1">
    <citation type="journal article" date="2006" name="J. Bacteriol.">
        <title>The genome sequence of the obligately chemolithoautotrophic, facultatively anaerobic bacterium Thiobacillus denitrificans.</title>
        <authorList>
            <person name="Beller H.R."/>
            <person name="Chain P.S."/>
            <person name="Letain T.E."/>
            <person name="Chakicherla A."/>
            <person name="Larimer F.W."/>
            <person name="Richardson P.M."/>
            <person name="Coleman M.A."/>
            <person name="Wood A.P."/>
            <person name="Kelly D.P."/>
        </authorList>
    </citation>
    <scope>NUCLEOTIDE SEQUENCE [LARGE SCALE GENOMIC DNA]</scope>
    <source>
        <strain>ATCC 25259 / T1</strain>
    </source>
</reference>
<sequence>MNITKDVSRLGQSLWLDNLSRDLLRDGALAKMIAEDGVSGVTSNPSIFQNALATSPHYADDLARLRREEADVERRYEALVIPDIRDACDLLLPLFERSAGNDGYVSLEVAPRLAYDTSGTVDEARRLWSLVDRPNLLVKVPGTPEGVDAFETLTQLGINVNVTLLFSIAQAQAVFDAYVRGLGKRAASGADLRRAKAVASLFLSRVDTAVDAELAGIGTQESLSLRGKAAVAMAKLAYQAYLETFRGPAFTALAARGARPQFLLWASTGVKNPDYHDLLYVEPLIGRETINTLPDKTLAALRDHGQPVPQLEQAVDEASAQLAEFARLGVDLDAVAARLQDAGVKQFETSYQALLAQIG</sequence>
<comment type="function">
    <text evidence="1">Transaldolase is important for the balance of metabolites in the pentose-phosphate pathway.</text>
</comment>
<comment type="catalytic activity">
    <reaction evidence="1">
        <text>D-sedoheptulose 7-phosphate + D-glyceraldehyde 3-phosphate = D-erythrose 4-phosphate + beta-D-fructose 6-phosphate</text>
        <dbReference type="Rhea" id="RHEA:17053"/>
        <dbReference type="ChEBI" id="CHEBI:16897"/>
        <dbReference type="ChEBI" id="CHEBI:57483"/>
        <dbReference type="ChEBI" id="CHEBI:57634"/>
        <dbReference type="ChEBI" id="CHEBI:59776"/>
        <dbReference type="EC" id="2.2.1.2"/>
    </reaction>
</comment>
<comment type="pathway">
    <text evidence="1">Carbohydrate degradation; pentose phosphate pathway; D-glyceraldehyde 3-phosphate and beta-D-fructose 6-phosphate from D-ribose 5-phosphate and D-xylulose 5-phosphate (non-oxidative stage): step 2/3.</text>
</comment>
<comment type="subcellular location">
    <subcellularLocation>
        <location evidence="1">Cytoplasm</location>
    </subcellularLocation>
</comment>
<comment type="similarity">
    <text evidence="1">Belongs to the transaldolase family. Type 2 subfamily.</text>
</comment>
<protein>
    <recommendedName>
        <fullName evidence="1">Transaldolase</fullName>
        <ecNumber evidence="1">2.2.1.2</ecNumber>
    </recommendedName>
</protein>
<dbReference type="EC" id="2.2.1.2" evidence="1"/>
<dbReference type="EMBL" id="CP000116">
    <property type="protein sequence ID" value="AAZ96618.1"/>
    <property type="molecule type" value="Genomic_DNA"/>
</dbReference>
<dbReference type="RefSeq" id="WP_011311177.1">
    <property type="nucleotide sequence ID" value="NC_007404.1"/>
</dbReference>
<dbReference type="SMR" id="Q3SL03"/>
<dbReference type="STRING" id="292415.Tbd_0665"/>
<dbReference type="KEGG" id="tbd:Tbd_0665"/>
<dbReference type="eggNOG" id="COG0176">
    <property type="taxonomic scope" value="Bacteria"/>
</dbReference>
<dbReference type="HOGENOM" id="CLU_050771_1_0_4"/>
<dbReference type="OrthoDB" id="9809101at2"/>
<dbReference type="UniPathway" id="UPA00115">
    <property type="reaction ID" value="UER00414"/>
</dbReference>
<dbReference type="Proteomes" id="UP000008291">
    <property type="component" value="Chromosome"/>
</dbReference>
<dbReference type="GO" id="GO:0005737">
    <property type="term" value="C:cytoplasm"/>
    <property type="evidence" value="ECO:0007669"/>
    <property type="project" value="UniProtKB-SubCell"/>
</dbReference>
<dbReference type="GO" id="GO:0004801">
    <property type="term" value="F:transaldolase activity"/>
    <property type="evidence" value="ECO:0007669"/>
    <property type="project" value="UniProtKB-UniRule"/>
</dbReference>
<dbReference type="GO" id="GO:0005975">
    <property type="term" value="P:carbohydrate metabolic process"/>
    <property type="evidence" value="ECO:0007669"/>
    <property type="project" value="InterPro"/>
</dbReference>
<dbReference type="GO" id="GO:0006098">
    <property type="term" value="P:pentose-phosphate shunt"/>
    <property type="evidence" value="ECO:0007669"/>
    <property type="project" value="UniProtKB-UniRule"/>
</dbReference>
<dbReference type="CDD" id="cd00955">
    <property type="entry name" value="Transaldolase_like"/>
    <property type="match status" value="1"/>
</dbReference>
<dbReference type="Gene3D" id="3.20.20.70">
    <property type="entry name" value="Aldolase class I"/>
    <property type="match status" value="1"/>
</dbReference>
<dbReference type="HAMAP" id="MF_00493">
    <property type="entry name" value="Transaldolase_2"/>
    <property type="match status" value="1"/>
</dbReference>
<dbReference type="InterPro" id="IPR013785">
    <property type="entry name" value="Aldolase_TIM"/>
</dbReference>
<dbReference type="InterPro" id="IPR001585">
    <property type="entry name" value="TAL/FSA"/>
</dbReference>
<dbReference type="InterPro" id="IPR004732">
    <property type="entry name" value="Transaldolase_2"/>
</dbReference>
<dbReference type="InterPro" id="IPR018225">
    <property type="entry name" value="Transaldolase_AS"/>
</dbReference>
<dbReference type="NCBIfam" id="NF002881">
    <property type="entry name" value="PRK03343.1"/>
    <property type="match status" value="1"/>
</dbReference>
<dbReference type="NCBIfam" id="TIGR00876">
    <property type="entry name" value="tal_mycobact"/>
    <property type="match status" value="1"/>
</dbReference>
<dbReference type="PANTHER" id="PTHR10683">
    <property type="entry name" value="TRANSALDOLASE"/>
    <property type="match status" value="1"/>
</dbReference>
<dbReference type="PANTHER" id="PTHR10683:SF31">
    <property type="entry name" value="TRANSALDOLASE"/>
    <property type="match status" value="1"/>
</dbReference>
<dbReference type="Pfam" id="PF00923">
    <property type="entry name" value="TAL_FSA"/>
    <property type="match status" value="1"/>
</dbReference>
<dbReference type="PIRSF" id="PIRSF036915">
    <property type="entry name" value="Trnald_Bac_Plnt"/>
    <property type="match status" value="1"/>
</dbReference>
<dbReference type="SUPFAM" id="SSF51569">
    <property type="entry name" value="Aldolase"/>
    <property type="match status" value="1"/>
</dbReference>
<dbReference type="PROSITE" id="PS01054">
    <property type="entry name" value="TRANSALDOLASE_1"/>
    <property type="match status" value="1"/>
</dbReference>
<dbReference type="PROSITE" id="PS00958">
    <property type="entry name" value="TRANSALDOLASE_2"/>
    <property type="match status" value="1"/>
</dbReference>